<proteinExistence type="inferred from homology"/>
<organism>
    <name type="scientific">Brucella ovis (strain ATCC 25840 / 63/290 / NCTC 10512)</name>
    <dbReference type="NCBI Taxonomy" id="444178"/>
    <lineage>
        <taxon>Bacteria</taxon>
        <taxon>Pseudomonadati</taxon>
        <taxon>Pseudomonadota</taxon>
        <taxon>Alphaproteobacteria</taxon>
        <taxon>Hyphomicrobiales</taxon>
        <taxon>Brucellaceae</taxon>
        <taxon>Brucella/Ochrobactrum group</taxon>
        <taxon>Brucella</taxon>
    </lineage>
</organism>
<feature type="chain" id="PRO_1000054074" description="Cyclic pyranopterin monophosphate synthase">
    <location>
        <begin position="1"/>
        <end position="165"/>
    </location>
</feature>
<feature type="active site" evidence="1">
    <location>
        <position position="129"/>
    </location>
</feature>
<feature type="binding site" evidence="1">
    <location>
        <begin position="76"/>
        <end position="78"/>
    </location>
    <ligand>
        <name>substrate</name>
    </ligand>
</feature>
<feature type="binding site" evidence="1">
    <location>
        <begin position="114"/>
        <end position="115"/>
    </location>
    <ligand>
        <name>substrate</name>
    </ligand>
</feature>
<dbReference type="EC" id="4.6.1.17" evidence="1"/>
<dbReference type="EMBL" id="CP000708">
    <property type="protein sequence ID" value="ABQ60770.1"/>
    <property type="molecule type" value="Genomic_DNA"/>
</dbReference>
<dbReference type="RefSeq" id="WP_002964270.1">
    <property type="nucleotide sequence ID" value="NC_009505.1"/>
</dbReference>
<dbReference type="SMR" id="A5VQR6"/>
<dbReference type="GeneID" id="93016522"/>
<dbReference type="KEGG" id="bov:BOV_1101"/>
<dbReference type="HOGENOM" id="CLU_074693_1_1_5"/>
<dbReference type="PhylomeDB" id="A5VQR6"/>
<dbReference type="UniPathway" id="UPA00344"/>
<dbReference type="Proteomes" id="UP000006383">
    <property type="component" value="Chromosome I"/>
</dbReference>
<dbReference type="GO" id="GO:0061799">
    <property type="term" value="F:cyclic pyranopterin monophosphate synthase activity"/>
    <property type="evidence" value="ECO:0007669"/>
    <property type="project" value="UniProtKB-UniRule"/>
</dbReference>
<dbReference type="GO" id="GO:0006777">
    <property type="term" value="P:Mo-molybdopterin cofactor biosynthetic process"/>
    <property type="evidence" value="ECO:0007669"/>
    <property type="project" value="UniProtKB-UniRule"/>
</dbReference>
<dbReference type="CDD" id="cd01420">
    <property type="entry name" value="MoaC_PE"/>
    <property type="match status" value="1"/>
</dbReference>
<dbReference type="Gene3D" id="3.30.70.640">
    <property type="entry name" value="Molybdopterin cofactor biosynthesis C (MoaC) domain"/>
    <property type="match status" value="1"/>
</dbReference>
<dbReference type="HAMAP" id="MF_01224_B">
    <property type="entry name" value="MoaC_B"/>
    <property type="match status" value="1"/>
</dbReference>
<dbReference type="InterPro" id="IPR023045">
    <property type="entry name" value="MoaC"/>
</dbReference>
<dbReference type="InterPro" id="IPR047594">
    <property type="entry name" value="MoaC_bact/euk"/>
</dbReference>
<dbReference type="InterPro" id="IPR036522">
    <property type="entry name" value="MoaC_sf"/>
</dbReference>
<dbReference type="InterPro" id="IPR050105">
    <property type="entry name" value="MoCo_biosynth_MoaA/MoaC"/>
</dbReference>
<dbReference type="InterPro" id="IPR002820">
    <property type="entry name" value="Mopterin_CF_biosynth-C_dom"/>
</dbReference>
<dbReference type="NCBIfam" id="TIGR00581">
    <property type="entry name" value="moaC"/>
    <property type="match status" value="1"/>
</dbReference>
<dbReference type="NCBIfam" id="NF006870">
    <property type="entry name" value="PRK09364.1"/>
    <property type="match status" value="1"/>
</dbReference>
<dbReference type="PANTHER" id="PTHR22960">
    <property type="entry name" value="MOLYBDOPTERIN COFACTOR SYNTHESIS PROTEIN A"/>
    <property type="match status" value="1"/>
</dbReference>
<dbReference type="Pfam" id="PF01967">
    <property type="entry name" value="MoaC"/>
    <property type="match status" value="1"/>
</dbReference>
<dbReference type="SUPFAM" id="SSF55040">
    <property type="entry name" value="Molybdenum cofactor biosynthesis protein C, MoaC"/>
    <property type="match status" value="1"/>
</dbReference>
<accession>A5VQR6</accession>
<comment type="function">
    <text evidence="1">Catalyzes the conversion of (8S)-3',8-cyclo-7,8-dihydroguanosine 5'-triphosphate to cyclic pyranopterin monophosphate (cPMP).</text>
</comment>
<comment type="catalytic activity">
    <reaction evidence="1">
        <text>(8S)-3',8-cyclo-7,8-dihydroguanosine 5'-triphosphate = cyclic pyranopterin phosphate + diphosphate</text>
        <dbReference type="Rhea" id="RHEA:49580"/>
        <dbReference type="ChEBI" id="CHEBI:33019"/>
        <dbReference type="ChEBI" id="CHEBI:59648"/>
        <dbReference type="ChEBI" id="CHEBI:131766"/>
        <dbReference type="EC" id="4.6.1.17"/>
    </reaction>
</comment>
<comment type="pathway">
    <text evidence="1">Cofactor biosynthesis; molybdopterin biosynthesis.</text>
</comment>
<comment type="subunit">
    <text evidence="1">Homohexamer; trimer of dimers.</text>
</comment>
<comment type="similarity">
    <text evidence="1">Belongs to the MoaC family.</text>
</comment>
<evidence type="ECO:0000255" key="1">
    <source>
        <dbReference type="HAMAP-Rule" id="MF_01224"/>
    </source>
</evidence>
<protein>
    <recommendedName>
        <fullName evidence="1">Cyclic pyranopterin monophosphate synthase</fullName>
        <ecNumber evidence="1">4.6.1.17</ecNumber>
    </recommendedName>
    <alternativeName>
        <fullName evidence="1">Molybdenum cofactor biosynthesis protein C</fullName>
    </alternativeName>
</protein>
<name>MOAC_BRUO2</name>
<gene>
    <name evidence="1" type="primary">moaC</name>
    <name type="ordered locus">BOV_1101</name>
</gene>
<sequence>MSGKLTHIDQTGAANMVDVGSKDETERQAVAEGAVRMKPETLALILEGNAAKGDVIGTARLAGIMAAKRTSDLIPLCHPLMLTKVAVEIEPDENLPGLRVRALARLKGRTGVEMEALTAASVTCLTIYDMAKAVDRHMEIGSIRVIEKSGGKSGDWAVSDPALMR</sequence>
<reference key="1">
    <citation type="journal article" date="2009" name="PLoS ONE">
        <title>Genome degradation in Brucella ovis corresponds with narrowing of its host range and tissue tropism.</title>
        <authorList>
            <person name="Tsolis R.M."/>
            <person name="Seshadri R."/>
            <person name="Santos R.L."/>
            <person name="Sangari F.J."/>
            <person name="Lobo J.M."/>
            <person name="de Jong M.F."/>
            <person name="Ren Q."/>
            <person name="Myers G."/>
            <person name="Brinkac L.M."/>
            <person name="Nelson W.C."/>
            <person name="Deboy R.T."/>
            <person name="Angiuoli S."/>
            <person name="Khouri H."/>
            <person name="Dimitrov G."/>
            <person name="Robinson J.R."/>
            <person name="Mulligan S."/>
            <person name="Walker R.L."/>
            <person name="Elzer P.E."/>
            <person name="Hassan K.A."/>
            <person name="Paulsen I.T."/>
        </authorList>
    </citation>
    <scope>NUCLEOTIDE SEQUENCE [LARGE SCALE GENOMIC DNA]</scope>
    <source>
        <strain>ATCC 25840 / 63/290 / NCTC 10512</strain>
    </source>
</reference>
<keyword id="KW-0456">Lyase</keyword>
<keyword id="KW-0501">Molybdenum cofactor biosynthesis</keyword>